<keyword id="KW-0249">Electron transport</keyword>
<keyword id="KW-0349">Heme</keyword>
<keyword id="KW-0408">Iron</keyword>
<keyword id="KW-0472">Membrane</keyword>
<keyword id="KW-0479">Metal-binding</keyword>
<keyword id="KW-0496">Mitochondrion</keyword>
<keyword id="KW-0999">Mitochondrion inner membrane</keyword>
<keyword id="KW-1185">Reference proteome</keyword>
<keyword id="KW-0679">Respiratory chain</keyword>
<keyword id="KW-0812">Transmembrane</keyword>
<keyword id="KW-1133">Transmembrane helix</keyword>
<keyword id="KW-0813">Transport</keyword>
<keyword id="KW-0830">Ubiquinone</keyword>
<reference key="1">
    <citation type="submission" date="2003-07" db="EMBL/GenBank/DDBJ databases">
        <title>Genetic evidence of fertile hybridization between Bolivian and Guyanese squirrel monkeys in the breeding colony of the Pasteur Institute.</title>
        <authorList>
            <person name="Lavergne A."/>
            <person name="Contamin H."/>
        </authorList>
    </citation>
    <scope>NUCLEOTIDE SEQUENCE [GENOMIC DNA]</scope>
    <source>
        <tissue>Ear</tissue>
        <tissue>Liver</tissue>
    </source>
</reference>
<protein>
    <recommendedName>
        <fullName>Cytochrome b</fullName>
    </recommendedName>
    <alternativeName>
        <fullName>Complex III subunit 3</fullName>
    </alternativeName>
    <alternativeName>
        <fullName>Complex III subunit III</fullName>
    </alternativeName>
    <alternativeName>
        <fullName>Cytochrome b-c1 complex subunit 3</fullName>
    </alternativeName>
    <alternativeName>
        <fullName>Ubiquinol-cytochrome-c reductase complex cytochrome b subunit</fullName>
    </alternativeName>
</protein>
<accession>Q711L6</accession>
<evidence type="ECO:0000250" key="1"/>
<evidence type="ECO:0000250" key="2">
    <source>
        <dbReference type="UniProtKB" id="P00157"/>
    </source>
</evidence>
<evidence type="ECO:0000255" key="3">
    <source>
        <dbReference type="PROSITE-ProRule" id="PRU00967"/>
    </source>
</evidence>
<evidence type="ECO:0000255" key="4">
    <source>
        <dbReference type="PROSITE-ProRule" id="PRU00968"/>
    </source>
</evidence>
<name>CYB_SAIBB</name>
<comment type="function">
    <text evidence="2">Component of the ubiquinol-cytochrome c reductase complex (complex III or cytochrome b-c1 complex) that is part of the mitochondrial respiratory chain. The b-c1 complex mediates electron transfer from ubiquinol to cytochrome c. Contributes to the generation of a proton gradient across the mitochondrial membrane that is then used for ATP synthesis.</text>
</comment>
<comment type="cofactor">
    <cofactor evidence="2">
        <name>heme b</name>
        <dbReference type="ChEBI" id="CHEBI:60344"/>
    </cofactor>
    <text evidence="2">Binds 2 heme b groups non-covalently.</text>
</comment>
<comment type="subunit">
    <text evidence="2">The cytochrome bc1 complex contains 11 subunits: 3 respiratory subunits (MT-CYB, CYC1 and UQCRFS1), 2 core proteins (UQCRC1 and UQCRC2) and 6 low-molecular weight proteins (UQCRH/QCR6, UQCRB/QCR7, UQCRQ/QCR8, UQCR10/QCR9, UQCR11/QCR10 and a cleavage product of UQCRFS1). This cytochrome bc1 complex then forms a dimer.</text>
</comment>
<comment type="subcellular location">
    <subcellularLocation>
        <location evidence="2">Mitochondrion inner membrane</location>
        <topology evidence="2">Multi-pass membrane protein</topology>
    </subcellularLocation>
</comment>
<comment type="miscellaneous">
    <text evidence="1">Heme 1 (or BL or b562) is low-potential and absorbs at about 562 nm, and heme 2 (or BH or b566) is high-potential and absorbs at about 566 nm.</text>
</comment>
<comment type="similarity">
    <text evidence="3 4">Belongs to the cytochrome b family.</text>
</comment>
<comment type="caution">
    <text evidence="2">The full-length protein contains only eight transmembrane helices, not nine as predicted by bioinformatics tools.</text>
</comment>
<proteinExistence type="inferred from homology"/>
<feature type="chain" id="PRO_0000254857" description="Cytochrome b">
    <location>
        <begin position="1"/>
        <end position="379"/>
    </location>
</feature>
<feature type="transmembrane region" description="Helical" evidence="2">
    <location>
        <begin position="33"/>
        <end position="53"/>
    </location>
</feature>
<feature type="transmembrane region" description="Helical" evidence="2">
    <location>
        <begin position="77"/>
        <end position="98"/>
    </location>
</feature>
<feature type="transmembrane region" description="Helical" evidence="2">
    <location>
        <begin position="113"/>
        <end position="133"/>
    </location>
</feature>
<feature type="transmembrane region" description="Helical" evidence="2">
    <location>
        <begin position="178"/>
        <end position="198"/>
    </location>
</feature>
<feature type="transmembrane region" description="Helical" evidence="2">
    <location>
        <begin position="226"/>
        <end position="246"/>
    </location>
</feature>
<feature type="transmembrane region" description="Helical" evidence="2">
    <location>
        <begin position="288"/>
        <end position="308"/>
    </location>
</feature>
<feature type="transmembrane region" description="Helical" evidence="2">
    <location>
        <begin position="320"/>
        <end position="340"/>
    </location>
</feature>
<feature type="transmembrane region" description="Helical" evidence="2">
    <location>
        <begin position="347"/>
        <end position="367"/>
    </location>
</feature>
<feature type="binding site" description="axial binding residue" evidence="2">
    <location>
        <position position="83"/>
    </location>
    <ligand>
        <name>heme b</name>
        <dbReference type="ChEBI" id="CHEBI:60344"/>
        <label>b562</label>
    </ligand>
    <ligandPart>
        <name>Fe</name>
        <dbReference type="ChEBI" id="CHEBI:18248"/>
    </ligandPart>
</feature>
<feature type="binding site" description="axial binding residue" evidence="2">
    <location>
        <position position="97"/>
    </location>
    <ligand>
        <name>heme b</name>
        <dbReference type="ChEBI" id="CHEBI:60344"/>
        <label>b566</label>
    </ligand>
    <ligandPart>
        <name>Fe</name>
        <dbReference type="ChEBI" id="CHEBI:18248"/>
    </ligandPart>
</feature>
<feature type="binding site" description="axial binding residue" evidence="2">
    <location>
        <position position="182"/>
    </location>
    <ligand>
        <name>heme b</name>
        <dbReference type="ChEBI" id="CHEBI:60344"/>
        <label>b562</label>
    </ligand>
    <ligandPart>
        <name>Fe</name>
        <dbReference type="ChEBI" id="CHEBI:18248"/>
    </ligandPart>
</feature>
<feature type="binding site" description="axial binding residue" evidence="2">
    <location>
        <position position="196"/>
    </location>
    <ligand>
        <name>heme b</name>
        <dbReference type="ChEBI" id="CHEBI:60344"/>
        <label>b566</label>
    </ligand>
    <ligandPart>
        <name>Fe</name>
        <dbReference type="ChEBI" id="CHEBI:18248"/>
    </ligandPart>
</feature>
<feature type="binding site" evidence="2">
    <location>
        <position position="201"/>
    </location>
    <ligand>
        <name>a ubiquinone</name>
        <dbReference type="ChEBI" id="CHEBI:16389"/>
    </ligand>
</feature>
<gene>
    <name type="primary">MT-CYB</name>
    <name type="synonym">COB</name>
    <name type="synonym">CYTB</name>
    <name type="synonym">MTCYB</name>
</gene>
<dbReference type="EMBL" id="AJ315383">
    <property type="protein sequence ID" value="CAC86418.1"/>
    <property type="molecule type" value="Genomic_DNA"/>
</dbReference>
<dbReference type="EMBL" id="AJ315384">
    <property type="protein sequence ID" value="CAC86425.1"/>
    <property type="molecule type" value="Genomic_DNA"/>
</dbReference>
<dbReference type="EMBL" id="AJ315385">
    <property type="protein sequence ID" value="CAC86426.1"/>
    <property type="molecule type" value="Genomic_DNA"/>
</dbReference>
<dbReference type="EMBL" id="AJ315386">
    <property type="protein sequence ID" value="CAC86427.1"/>
    <property type="molecule type" value="Genomic_DNA"/>
</dbReference>
<dbReference type="EMBL" id="AJ315387">
    <property type="protein sequence ID" value="CAC86428.1"/>
    <property type="molecule type" value="Genomic_DNA"/>
</dbReference>
<dbReference type="EMBL" id="AJ315388">
    <property type="protein sequence ID" value="CAC86429.1"/>
    <property type="molecule type" value="Genomic_DNA"/>
</dbReference>
<dbReference type="EMBL" id="AJ315389">
    <property type="protein sequence ID" value="CAC86430.1"/>
    <property type="molecule type" value="Genomic_DNA"/>
</dbReference>
<dbReference type="RefSeq" id="YP_006493382.1">
    <property type="nucleotide sequence ID" value="NC_018096.1"/>
</dbReference>
<dbReference type="SMR" id="Q711L6"/>
<dbReference type="STRING" id="39432.ENSSBOP00000000013"/>
<dbReference type="Ensembl" id="ENSSBOT00000000035.1">
    <property type="protein sequence ID" value="ENSSBOP00000000013.1"/>
    <property type="gene ID" value="ENSSBOG00000000035.1"/>
</dbReference>
<dbReference type="GeneID" id="13228909"/>
<dbReference type="KEGG" id="sbq:13228909"/>
<dbReference type="CTD" id="4519"/>
<dbReference type="GeneTree" id="ENSGT00390000017948"/>
<dbReference type="OMA" id="NISAWWN"/>
<dbReference type="OrthoDB" id="69776at9443"/>
<dbReference type="Proteomes" id="UP000233220">
    <property type="component" value="Unplaced"/>
</dbReference>
<dbReference type="GO" id="GO:0005743">
    <property type="term" value="C:mitochondrial inner membrane"/>
    <property type="evidence" value="ECO:0007669"/>
    <property type="project" value="UniProtKB-SubCell"/>
</dbReference>
<dbReference type="GO" id="GO:0045275">
    <property type="term" value="C:respiratory chain complex III"/>
    <property type="evidence" value="ECO:0007669"/>
    <property type="project" value="InterPro"/>
</dbReference>
<dbReference type="GO" id="GO:0046872">
    <property type="term" value="F:metal ion binding"/>
    <property type="evidence" value="ECO:0007669"/>
    <property type="project" value="UniProtKB-KW"/>
</dbReference>
<dbReference type="GO" id="GO:0008121">
    <property type="term" value="F:ubiquinol-cytochrome-c reductase activity"/>
    <property type="evidence" value="ECO:0007669"/>
    <property type="project" value="InterPro"/>
</dbReference>
<dbReference type="GO" id="GO:0006122">
    <property type="term" value="P:mitochondrial electron transport, ubiquinol to cytochrome c"/>
    <property type="evidence" value="ECO:0007669"/>
    <property type="project" value="TreeGrafter"/>
</dbReference>
<dbReference type="CDD" id="cd00290">
    <property type="entry name" value="cytochrome_b_C"/>
    <property type="match status" value="1"/>
</dbReference>
<dbReference type="CDD" id="cd00284">
    <property type="entry name" value="Cytochrome_b_N"/>
    <property type="match status" value="1"/>
</dbReference>
<dbReference type="FunFam" id="1.20.810.10:FF:000002">
    <property type="entry name" value="Cytochrome b"/>
    <property type="match status" value="1"/>
</dbReference>
<dbReference type="Gene3D" id="1.20.810.10">
    <property type="entry name" value="Cytochrome Bc1 Complex, Chain C"/>
    <property type="match status" value="1"/>
</dbReference>
<dbReference type="InterPro" id="IPR005798">
    <property type="entry name" value="Cyt_b/b6_C"/>
</dbReference>
<dbReference type="InterPro" id="IPR036150">
    <property type="entry name" value="Cyt_b/b6_C_sf"/>
</dbReference>
<dbReference type="InterPro" id="IPR005797">
    <property type="entry name" value="Cyt_b/b6_N"/>
</dbReference>
<dbReference type="InterPro" id="IPR027387">
    <property type="entry name" value="Cytb/b6-like_sf"/>
</dbReference>
<dbReference type="InterPro" id="IPR030689">
    <property type="entry name" value="Cytochrome_b"/>
</dbReference>
<dbReference type="InterPro" id="IPR048260">
    <property type="entry name" value="Cytochrome_b_C_euk/bac"/>
</dbReference>
<dbReference type="InterPro" id="IPR048259">
    <property type="entry name" value="Cytochrome_b_N_euk/bac"/>
</dbReference>
<dbReference type="InterPro" id="IPR016174">
    <property type="entry name" value="Di-haem_cyt_TM"/>
</dbReference>
<dbReference type="PANTHER" id="PTHR19271">
    <property type="entry name" value="CYTOCHROME B"/>
    <property type="match status" value="1"/>
</dbReference>
<dbReference type="PANTHER" id="PTHR19271:SF16">
    <property type="entry name" value="CYTOCHROME B"/>
    <property type="match status" value="1"/>
</dbReference>
<dbReference type="Pfam" id="PF00032">
    <property type="entry name" value="Cytochrom_B_C"/>
    <property type="match status" value="1"/>
</dbReference>
<dbReference type="Pfam" id="PF00033">
    <property type="entry name" value="Cytochrome_B"/>
    <property type="match status" value="1"/>
</dbReference>
<dbReference type="PIRSF" id="PIRSF038885">
    <property type="entry name" value="COB"/>
    <property type="match status" value="1"/>
</dbReference>
<dbReference type="SUPFAM" id="SSF81648">
    <property type="entry name" value="a domain/subunit of cytochrome bc1 complex (Ubiquinol-cytochrome c reductase)"/>
    <property type="match status" value="1"/>
</dbReference>
<dbReference type="SUPFAM" id="SSF81342">
    <property type="entry name" value="Transmembrane di-heme cytochromes"/>
    <property type="match status" value="1"/>
</dbReference>
<dbReference type="PROSITE" id="PS51003">
    <property type="entry name" value="CYTB_CTER"/>
    <property type="match status" value="1"/>
</dbReference>
<dbReference type="PROSITE" id="PS51002">
    <property type="entry name" value="CYTB_NTER"/>
    <property type="match status" value="1"/>
</dbReference>
<sequence length="379" mass="42716">MTSPRKTHPLKKMINNSFIDLPTPSNISFWWNLGSLLGACLIIQITTGLFLAMHYTPDTQTAFSSVAHITRDVNHGWTIRYMHANGASMFFTCLFLHIGRGLYYGSFLSRETWNIGTILLLTTMATAFMGYVLPWGQMSLWGATVITNLLSAIPYIGSNLVEWVWGGFSVDKATLTRFFTFHFVLPFIIAALATIHLLFLHETGSNNPSGMTSNPDKITFHPYYTIKDILGLILLLLLLMSLTLFMPDLLTDPDNYTLANPLSTPPHIKPEWYFLFAYAILRSIPNKLGGVLALVLSILVLMIIPTTHLSNQQSMTFRPITQIMFWMLTANLLTLTWIGGQPVEYPFIIIGQIASIMYFLIITTLIPLSALIENKLLKW</sequence>
<geneLocation type="mitochondrion"/>
<organism>
    <name type="scientific">Saimiri boliviensis boliviensis</name>
    <name type="common">Bolivian squirrel monkey</name>
    <dbReference type="NCBI Taxonomy" id="39432"/>
    <lineage>
        <taxon>Eukaryota</taxon>
        <taxon>Metazoa</taxon>
        <taxon>Chordata</taxon>
        <taxon>Craniata</taxon>
        <taxon>Vertebrata</taxon>
        <taxon>Euteleostomi</taxon>
        <taxon>Mammalia</taxon>
        <taxon>Eutheria</taxon>
        <taxon>Euarchontoglires</taxon>
        <taxon>Primates</taxon>
        <taxon>Haplorrhini</taxon>
        <taxon>Platyrrhini</taxon>
        <taxon>Cebidae</taxon>
        <taxon>Saimiriinae</taxon>
        <taxon>Saimiri</taxon>
    </lineage>
</organism>